<evidence type="ECO:0000255" key="1">
    <source>
        <dbReference type="HAMAP-Rule" id="MF_00302"/>
    </source>
</evidence>
<evidence type="ECO:0000256" key="2">
    <source>
        <dbReference type="SAM" id="MobiDB-lite"/>
    </source>
</evidence>
<sequence length="122" mass="13521">MVRMATKPPSMTPTPPTGAPPRDDGGSVVLERRTQRTQPPQMYQVVMLNDDYTPMEFVIVVLQEFFGKDREAATQIMLKIHLDGKGVCGVYSRDVAATKVEQVREAAHKAGHPLQCLSEPVE</sequence>
<organism>
    <name type="scientific">Paracidovorax citrulli (strain AAC00-1)</name>
    <name type="common">Acidovorax citrulli</name>
    <dbReference type="NCBI Taxonomy" id="397945"/>
    <lineage>
        <taxon>Bacteria</taxon>
        <taxon>Pseudomonadati</taxon>
        <taxon>Pseudomonadota</taxon>
        <taxon>Betaproteobacteria</taxon>
        <taxon>Burkholderiales</taxon>
        <taxon>Comamonadaceae</taxon>
        <taxon>Paracidovorax</taxon>
    </lineage>
</organism>
<name>CLPS_PARC0</name>
<feature type="chain" id="PRO_0000300695" description="ATP-dependent Clp protease adapter protein ClpS">
    <location>
        <begin position="1"/>
        <end position="122"/>
    </location>
</feature>
<feature type="region of interest" description="Disordered" evidence="2">
    <location>
        <begin position="1"/>
        <end position="27"/>
    </location>
</feature>
<feature type="compositionally biased region" description="Pro residues" evidence="2">
    <location>
        <begin position="10"/>
        <end position="19"/>
    </location>
</feature>
<accession>A1TS63</accession>
<dbReference type="EMBL" id="CP000512">
    <property type="protein sequence ID" value="ABM33801.1"/>
    <property type="molecule type" value="Genomic_DNA"/>
</dbReference>
<dbReference type="SMR" id="A1TS63"/>
<dbReference type="STRING" id="397945.Aave_3239"/>
<dbReference type="KEGG" id="aav:Aave_3239"/>
<dbReference type="eggNOG" id="COG2127">
    <property type="taxonomic scope" value="Bacteria"/>
</dbReference>
<dbReference type="HOGENOM" id="CLU_134358_2_1_4"/>
<dbReference type="OrthoDB" id="9796121at2"/>
<dbReference type="Proteomes" id="UP000002596">
    <property type="component" value="Chromosome"/>
</dbReference>
<dbReference type="GO" id="GO:0030163">
    <property type="term" value="P:protein catabolic process"/>
    <property type="evidence" value="ECO:0007669"/>
    <property type="project" value="InterPro"/>
</dbReference>
<dbReference type="GO" id="GO:0006508">
    <property type="term" value="P:proteolysis"/>
    <property type="evidence" value="ECO:0007669"/>
    <property type="project" value="UniProtKB-UniRule"/>
</dbReference>
<dbReference type="FunFam" id="3.30.1390.10:FF:000002">
    <property type="entry name" value="ATP-dependent Clp protease adapter protein ClpS"/>
    <property type="match status" value="1"/>
</dbReference>
<dbReference type="Gene3D" id="3.30.1390.10">
    <property type="match status" value="1"/>
</dbReference>
<dbReference type="HAMAP" id="MF_00302">
    <property type="entry name" value="ClpS"/>
    <property type="match status" value="1"/>
</dbReference>
<dbReference type="InterPro" id="IPR022935">
    <property type="entry name" value="ClpS"/>
</dbReference>
<dbReference type="InterPro" id="IPR003769">
    <property type="entry name" value="ClpS_core"/>
</dbReference>
<dbReference type="InterPro" id="IPR014719">
    <property type="entry name" value="Ribosomal_bL12_C/ClpS-like"/>
</dbReference>
<dbReference type="NCBIfam" id="NF000672">
    <property type="entry name" value="PRK00033.1-5"/>
    <property type="match status" value="1"/>
</dbReference>
<dbReference type="PANTHER" id="PTHR33473:SF19">
    <property type="entry name" value="ATP-DEPENDENT CLP PROTEASE ADAPTER PROTEIN CLPS"/>
    <property type="match status" value="1"/>
</dbReference>
<dbReference type="PANTHER" id="PTHR33473">
    <property type="entry name" value="ATP-DEPENDENT CLP PROTEASE ADAPTER PROTEIN CLPS1, CHLOROPLASTIC"/>
    <property type="match status" value="1"/>
</dbReference>
<dbReference type="Pfam" id="PF02617">
    <property type="entry name" value="ClpS"/>
    <property type="match status" value="1"/>
</dbReference>
<dbReference type="SUPFAM" id="SSF54736">
    <property type="entry name" value="ClpS-like"/>
    <property type="match status" value="1"/>
</dbReference>
<proteinExistence type="inferred from homology"/>
<reference key="1">
    <citation type="submission" date="2006-12" db="EMBL/GenBank/DDBJ databases">
        <title>Complete sequence of Acidovorax avenae subsp. citrulli AAC00-1.</title>
        <authorList>
            <person name="Copeland A."/>
            <person name="Lucas S."/>
            <person name="Lapidus A."/>
            <person name="Barry K."/>
            <person name="Detter J.C."/>
            <person name="Glavina del Rio T."/>
            <person name="Dalin E."/>
            <person name="Tice H."/>
            <person name="Pitluck S."/>
            <person name="Kiss H."/>
            <person name="Brettin T."/>
            <person name="Bruce D."/>
            <person name="Han C."/>
            <person name="Tapia R."/>
            <person name="Gilna P."/>
            <person name="Schmutz J."/>
            <person name="Larimer F."/>
            <person name="Land M."/>
            <person name="Hauser L."/>
            <person name="Kyrpides N."/>
            <person name="Kim E."/>
            <person name="Stahl D."/>
            <person name="Richardson P."/>
        </authorList>
    </citation>
    <scope>NUCLEOTIDE SEQUENCE [LARGE SCALE GENOMIC DNA]</scope>
    <source>
        <strain>AAC00-1</strain>
    </source>
</reference>
<comment type="function">
    <text evidence="1">Involved in the modulation of the specificity of the ClpAP-mediated ATP-dependent protein degradation.</text>
</comment>
<comment type="subunit">
    <text evidence="1">Binds to the N-terminal domain of the chaperone ClpA.</text>
</comment>
<comment type="similarity">
    <text evidence="1">Belongs to the ClpS family.</text>
</comment>
<gene>
    <name evidence="1" type="primary">clpS</name>
    <name type="ordered locus">Aave_3239</name>
</gene>
<protein>
    <recommendedName>
        <fullName evidence="1">ATP-dependent Clp protease adapter protein ClpS</fullName>
    </recommendedName>
</protein>